<organism>
    <name type="scientific">Arabidopsis thaliana</name>
    <name type="common">Mouse-ear cress</name>
    <dbReference type="NCBI Taxonomy" id="3702"/>
    <lineage>
        <taxon>Eukaryota</taxon>
        <taxon>Viridiplantae</taxon>
        <taxon>Streptophyta</taxon>
        <taxon>Embryophyta</taxon>
        <taxon>Tracheophyta</taxon>
        <taxon>Spermatophyta</taxon>
        <taxon>Magnoliopsida</taxon>
        <taxon>eudicotyledons</taxon>
        <taxon>Gunneridae</taxon>
        <taxon>Pentapetalae</taxon>
        <taxon>rosids</taxon>
        <taxon>malvids</taxon>
        <taxon>Brassicales</taxon>
        <taxon>Brassicaceae</taxon>
        <taxon>Camelineae</taxon>
        <taxon>Arabidopsis</taxon>
    </lineage>
</organism>
<sequence>MAGKSDLPVIARDDNLSEETKTLISSLPTYQDSHVKLCKYQGCWYYHNTLQAVINYQRNFQPQDTDIILASFPKSGTTWLKALSVAIVERSKQPFDDDPLTHPLLSDNPHGIVPFFEFDMYLKTSTPDLTKFSTSSPRLFSTHMPLHTFKEGLKGSPCKVVYMCRNIKDVLISDWHFRSKYSNNEVSRSTLESMFESFCGGVSFYGPFWDHALSYWRGSLENPKHVLFMRYEEMKTEPCVQVKRLAEFLGFPFTKEEEDSGSISKLLELCSLGNLSGLEVNKTGKTWMNYDYKSYFRKGEVGDWKNHLTPEMENKIDMIIEEKLKGSDLKF</sequence>
<accession>Q9FG94</accession>
<accession>Q0WTI4</accession>
<proteinExistence type="evidence at transcript level"/>
<name>SOT1_ARATH</name>
<feature type="chain" id="PRO_0000417049" description="Cytosolic sulfotransferase 1">
    <location>
        <begin position="1"/>
        <end position="331"/>
    </location>
</feature>
<feature type="active site" description="Proton acceptor" evidence="1">
    <location>
        <position position="143"/>
    </location>
</feature>
<feature type="binding site" evidence="1">
    <location>
        <begin position="74"/>
        <end position="79"/>
    </location>
    <ligand>
        <name>3'-phosphoadenylyl sulfate</name>
        <dbReference type="ChEBI" id="CHEBI:58339"/>
    </ligand>
</feature>
<feature type="binding site" evidence="1">
    <location>
        <position position="165"/>
    </location>
    <ligand>
        <name>3'-phosphoadenylyl sulfate</name>
        <dbReference type="ChEBI" id="CHEBI:58339"/>
    </ligand>
</feature>
<feature type="binding site" evidence="1">
    <location>
        <position position="173"/>
    </location>
    <ligand>
        <name>3'-phosphoadenylyl sulfate</name>
        <dbReference type="ChEBI" id="CHEBI:58339"/>
    </ligand>
</feature>
<feature type="binding site" evidence="1">
    <location>
        <position position="231"/>
    </location>
    <ligand>
        <name>3'-phosphoadenylyl sulfate</name>
        <dbReference type="ChEBI" id="CHEBI:58339"/>
    </ligand>
</feature>
<feature type="binding site" evidence="1">
    <location>
        <begin position="297"/>
        <end position="299"/>
    </location>
    <ligand>
        <name>3'-phosphoadenylyl sulfate</name>
        <dbReference type="ChEBI" id="CHEBI:58339"/>
    </ligand>
</feature>
<dbReference type="EC" id="2.8.2.-"/>
<dbReference type="EMBL" id="AB026651">
    <property type="protein sequence ID" value="BAB11296.1"/>
    <property type="molecule type" value="Genomic_DNA"/>
</dbReference>
<dbReference type="EMBL" id="CP002688">
    <property type="protein sequence ID" value="AED94996.1"/>
    <property type="molecule type" value="Genomic_DNA"/>
</dbReference>
<dbReference type="EMBL" id="BT010865">
    <property type="protein sequence ID" value="AAR24232.1"/>
    <property type="molecule type" value="mRNA"/>
</dbReference>
<dbReference type="EMBL" id="BT015380">
    <property type="protein sequence ID" value="AAU05503.1"/>
    <property type="molecule type" value="mRNA"/>
</dbReference>
<dbReference type="EMBL" id="AK227570">
    <property type="protein sequence ID" value="BAE99564.1"/>
    <property type="molecule type" value="mRNA"/>
</dbReference>
<dbReference type="RefSeq" id="NP_199182.1">
    <property type="nucleotide sequence ID" value="NM_123735.4"/>
</dbReference>
<dbReference type="SMR" id="Q9FG94"/>
<dbReference type="BioGRID" id="19639">
    <property type="interactions" value="1"/>
</dbReference>
<dbReference type="FunCoup" id="Q9FG94">
    <property type="interactions" value="42"/>
</dbReference>
<dbReference type="IntAct" id="Q9FG94">
    <property type="interactions" value="1"/>
</dbReference>
<dbReference type="STRING" id="3702.Q9FG94"/>
<dbReference type="PaxDb" id="3702-AT5G43690.1"/>
<dbReference type="ProteomicsDB" id="245328"/>
<dbReference type="EnsemblPlants" id="AT5G43690.1">
    <property type="protein sequence ID" value="AT5G43690.1"/>
    <property type="gene ID" value="AT5G43690"/>
</dbReference>
<dbReference type="GeneID" id="834389"/>
<dbReference type="Gramene" id="AT5G43690.1">
    <property type="protein sequence ID" value="AT5G43690.1"/>
    <property type="gene ID" value="AT5G43690"/>
</dbReference>
<dbReference type="KEGG" id="ath:AT5G43690"/>
<dbReference type="Araport" id="AT5G43690"/>
<dbReference type="TAIR" id="AT5G43690"/>
<dbReference type="eggNOG" id="KOG1584">
    <property type="taxonomic scope" value="Eukaryota"/>
</dbReference>
<dbReference type="HOGENOM" id="CLU_027239_0_3_1"/>
<dbReference type="InParanoid" id="Q9FG94"/>
<dbReference type="OMA" id="PIWDHAL"/>
<dbReference type="PhylomeDB" id="Q9FG94"/>
<dbReference type="BioCyc" id="ARA:AT5G43690-MONOMER"/>
<dbReference type="PRO" id="PR:Q9FG94"/>
<dbReference type="Proteomes" id="UP000006548">
    <property type="component" value="Chromosome 5"/>
</dbReference>
<dbReference type="ExpressionAtlas" id="Q9FG94">
    <property type="expression patterns" value="baseline and differential"/>
</dbReference>
<dbReference type="GO" id="GO:0005737">
    <property type="term" value="C:cytoplasm"/>
    <property type="evidence" value="ECO:0007669"/>
    <property type="project" value="UniProtKB-SubCell"/>
</dbReference>
<dbReference type="GO" id="GO:0008146">
    <property type="term" value="F:sulfotransferase activity"/>
    <property type="evidence" value="ECO:0007669"/>
    <property type="project" value="InterPro"/>
</dbReference>
<dbReference type="Gene3D" id="3.40.50.300">
    <property type="entry name" value="P-loop containing nucleotide triphosphate hydrolases"/>
    <property type="match status" value="1"/>
</dbReference>
<dbReference type="InterPro" id="IPR027417">
    <property type="entry name" value="P-loop_NTPase"/>
</dbReference>
<dbReference type="InterPro" id="IPR000863">
    <property type="entry name" value="Sulfotransferase_dom"/>
</dbReference>
<dbReference type="PANTHER" id="PTHR11783">
    <property type="entry name" value="SULFOTRANSFERASE SULT"/>
    <property type="match status" value="1"/>
</dbReference>
<dbReference type="Pfam" id="PF00685">
    <property type="entry name" value="Sulfotransfer_1"/>
    <property type="match status" value="1"/>
</dbReference>
<dbReference type="SUPFAM" id="SSF52540">
    <property type="entry name" value="P-loop containing nucleoside triphosphate hydrolases"/>
    <property type="match status" value="1"/>
</dbReference>
<reference key="1">
    <citation type="submission" date="1999-04" db="EMBL/GenBank/DDBJ databases">
        <title>Structural analysis of Arabidopsis thaliana chromosome 5. XI.</title>
        <authorList>
            <person name="Kaneko T."/>
            <person name="Katoh T."/>
            <person name="Asamizu E."/>
            <person name="Sato S."/>
            <person name="Nakamura Y."/>
            <person name="Kotani H."/>
            <person name="Tabata S."/>
        </authorList>
    </citation>
    <scope>NUCLEOTIDE SEQUENCE [LARGE SCALE GENOMIC DNA]</scope>
    <source>
        <strain>cv. Columbia</strain>
    </source>
</reference>
<reference key="2">
    <citation type="journal article" date="2017" name="Plant J.">
        <title>Araport11: a complete reannotation of the Arabidopsis thaliana reference genome.</title>
        <authorList>
            <person name="Cheng C.Y."/>
            <person name="Krishnakumar V."/>
            <person name="Chan A.P."/>
            <person name="Thibaud-Nissen F."/>
            <person name="Schobel S."/>
            <person name="Town C.D."/>
        </authorList>
    </citation>
    <scope>GENOME REANNOTATION</scope>
    <source>
        <strain>cv. Columbia</strain>
    </source>
</reference>
<reference key="3">
    <citation type="journal article" date="2003" name="Science">
        <title>Empirical analysis of transcriptional activity in the Arabidopsis genome.</title>
        <authorList>
            <person name="Yamada K."/>
            <person name="Lim J."/>
            <person name="Dale J.M."/>
            <person name="Chen H."/>
            <person name="Shinn P."/>
            <person name="Palm C.J."/>
            <person name="Southwick A.M."/>
            <person name="Wu H.C."/>
            <person name="Kim C.J."/>
            <person name="Nguyen M."/>
            <person name="Pham P.K."/>
            <person name="Cheuk R.F."/>
            <person name="Karlin-Newmann G."/>
            <person name="Liu S.X."/>
            <person name="Lam B."/>
            <person name="Sakano H."/>
            <person name="Wu T."/>
            <person name="Yu G."/>
            <person name="Miranda M."/>
            <person name="Quach H.L."/>
            <person name="Tripp M."/>
            <person name="Chang C.H."/>
            <person name="Lee J.M."/>
            <person name="Toriumi M.J."/>
            <person name="Chan M.M."/>
            <person name="Tang C.C."/>
            <person name="Onodera C.S."/>
            <person name="Deng J.M."/>
            <person name="Akiyama K."/>
            <person name="Ansari Y."/>
            <person name="Arakawa T."/>
            <person name="Banh J."/>
            <person name="Banno F."/>
            <person name="Bowser L."/>
            <person name="Brooks S.Y."/>
            <person name="Carninci P."/>
            <person name="Chao Q."/>
            <person name="Choy N."/>
            <person name="Enju A."/>
            <person name="Goldsmith A.D."/>
            <person name="Gurjal M."/>
            <person name="Hansen N.F."/>
            <person name="Hayashizaki Y."/>
            <person name="Johnson-Hopson C."/>
            <person name="Hsuan V.W."/>
            <person name="Iida K."/>
            <person name="Karnes M."/>
            <person name="Khan S."/>
            <person name="Koesema E."/>
            <person name="Ishida J."/>
            <person name="Jiang P.X."/>
            <person name="Jones T."/>
            <person name="Kawai J."/>
            <person name="Kamiya A."/>
            <person name="Meyers C."/>
            <person name="Nakajima M."/>
            <person name="Narusaka M."/>
            <person name="Seki M."/>
            <person name="Sakurai T."/>
            <person name="Satou M."/>
            <person name="Tamse R."/>
            <person name="Vaysberg M."/>
            <person name="Wallender E.K."/>
            <person name="Wong C."/>
            <person name="Yamamura Y."/>
            <person name="Yuan S."/>
            <person name="Shinozaki K."/>
            <person name="Davis R.W."/>
            <person name="Theologis A."/>
            <person name="Ecker J.R."/>
        </authorList>
    </citation>
    <scope>NUCLEOTIDE SEQUENCE [LARGE SCALE MRNA]</scope>
    <source>
        <strain>cv. Columbia</strain>
    </source>
</reference>
<reference key="4">
    <citation type="submission" date="2004-08" db="EMBL/GenBank/DDBJ databases">
        <title>Arabidopsis ORF clones.</title>
        <authorList>
            <person name="Cheuk R."/>
            <person name="Chen H."/>
            <person name="Kim C.J."/>
            <person name="Shinn P."/>
            <person name="Ecker J.R."/>
        </authorList>
    </citation>
    <scope>NUCLEOTIDE SEQUENCE [LARGE SCALE MRNA]</scope>
</reference>
<reference key="5">
    <citation type="submission" date="2006-07" db="EMBL/GenBank/DDBJ databases">
        <title>Large-scale analysis of RIKEN Arabidopsis full-length (RAFL) cDNAs.</title>
        <authorList>
            <person name="Totoki Y."/>
            <person name="Seki M."/>
            <person name="Ishida J."/>
            <person name="Nakajima M."/>
            <person name="Enju A."/>
            <person name="Kamiya A."/>
            <person name="Narusaka M."/>
            <person name="Shin-i T."/>
            <person name="Nakagawa M."/>
            <person name="Sakamoto N."/>
            <person name="Oishi K."/>
            <person name="Kohara Y."/>
            <person name="Kobayashi M."/>
            <person name="Toyoda A."/>
            <person name="Sakaki Y."/>
            <person name="Sakurai T."/>
            <person name="Iida K."/>
            <person name="Akiyama K."/>
            <person name="Satou M."/>
            <person name="Toyoda T."/>
            <person name="Konagaya A."/>
            <person name="Carninci P."/>
            <person name="Kawai J."/>
            <person name="Hayashizaki Y."/>
            <person name="Shinozaki K."/>
        </authorList>
    </citation>
    <scope>NUCLEOTIDE SEQUENCE [LARGE SCALE MRNA] OF 11-331</scope>
    <source>
        <strain>cv. Columbia</strain>
    </source>
</reference>
<reference key="6">
    <citation type="journal article" date="2004" name="J. Exp. Bot.">
        <title>The multi-protein family of Arabidopsis sulphotransferases and their relatives in other plant species.</title>
        <authorList>
            <person name="Klein M."/>
            <person name="Papenbrock J."/>
        </authorList>
    </citation>
    <scope>GENE FAMILY</scope>
    <scope>NOMENCLATURE</scope>
</reference>
<evidence type="ECO:0000250" key="1"/>
<evidence type="ECO:0000305" key="2"/>
<gene>
    <name type="primary">SOT1</name>
    <name type="ordered locus">At5g43690</name>
    <name type="ORF">MQD19.2</name>
</gene>
<protein>
    <recommendedName>
        <fullName>Cytosolic sulfotransferase 1</fullName>
        <shortName>AtSOT1</shortName>
        <ecNumber>2.8.2.-</ecNumber>
    </recommendedName>
</protein>
<comment type="function">
    <text evidence="1">Sulfotransferase that utilizes 3'-phospho-5'-adenylyl sulfate (PAPS) as sulfonate donor.</text>
</comment>
<comment type="subcellular location">
    <subcellularLocation>
        <location evidence="1">Cytoplasm</location>
    </subcellularLocation>
</comment>
<comment type="similarity">
    <text evidence="2">Belongs to the sulfotransferase 1 family.</text>
</comment>
<keyword id="KW-0963">Cytoplasm</keyword>
<keyword id="KW-1185">Reference proteome</keyword>
<keyword id="KW-0808">Transferase</keyword>